<comment type="function">
    <text evidence="2 7 8 10">May act as an adapter protein to couple membrane receptors to intracellular signaling pathways (Probable). Core component of the CTLH E3 ubiquitin-protein ligase complex that selectively accepts ubiquitin from UBE2H and mediates ubiquitination and subsequent proteasomal degradation of the transcription factor HBP1 (By similarity). Enhances dihydrotestosterone-induced transactivation activity of AR, as well as dexamethasone-induced transactivation activity of NR3C1, but does not affect estrogen-induced transactivation (By similarity). Acts as a guanine nucleotide exchange factor (GEF) for RAN GTPase (PubMed:18347012). May play an essential role in hemostasis and in maintaining microtubule dynamics with respect to both platelet shape and function (PubMed:19801445).</text>
</comment>
<comment type="subunit">
    <text evidence="2 7 9">May form homodimers. Identified in the CTLH complex that contains GID4, RANBP9 and/or RANBP10, MKLN1, MAEA, RMND5A (or alternatively its paralog RMND5B), GID8, ARMC8, WDR26 and YPEL5. Within this complex, MAEA, RMND5A (or alternatively its paralog RMND5B), GID8, WDR26, and RANBP9 and/or RANBP10 form the catalytic core, while GID4, MKLN1, ARMC8 and YPEL5 have ancillary roles. Interacts with RAN and RANBP9. Interacts with the HGF receptor MET. Interacts with AR (By similarity). Interacts with TUBB1 (PubMed:18347012). Interacts with YPEL5 (By similarity). May interact with TUBB5 (PubMed:18347012). Interacts with DDX4 (PubMed:27622290).</text>
</comment>
<comment type="subcellular location">
    <subcellularLocation>
        <location evidence="7">Cytoplasm</location>
    </subcellularLocation>
    <subcellularLocation>
        <location evidence="7">Nucleus</location>
    </subcellularLocation>
    <text>Predominantly cytoplasmic. Associates with cytoplasmic microtubules in mature megakaryocytes and platelets.</text>
</comment>
<comment type="tissue specificity">
    <text evidence="7">Expressed at highest levels in spleen and liver. Expressed in megakaryocytes and platelets (at protein level).</text>
</comment>
<comment type="domain">
    <text evidence="1">The SPRY domain mediates the interaction with MET.</text>
</comment>
<comment type="disruption phenotype">
    <text evidence="8">Mutant mice are viable and show no conspicuous phenotype. They have normal platelet counts and only slightly reduced proplatelet formation. Resting platelets tend to have a more spherical shape. Many platelets exhibit disorders in microtubule filament numbers and localization. The animals show a markedly prolonged bleeding time. Granule release is also reduced.</text>
</comment>
<comment type="similarity">
    <text evidence="10">Belongs to the RANBP9/10 family.</text>
</comment>
<comment type="sequence caution" evidence="10">
    <conflict type="erroneous initiation">
        <sequence resource="EMBL-CDS" id="AAH24698"/>
    </conflict>
    <text>Truncated N-terminus.</text>
</comment>
<comment type="sequence caution" evidence="10">
    <conflict type="erroneous initiation">
        <sequence resource="EMBL-CDS" id="AAR01221"/>
    </conflict>
    <text>Extended N-terminus.</text>
</comment>
<evidence type="ECO:0000250" key="1"/>
<evidence type="ECO:0000250" key="2">
    <source>
        <dbReference type="UniProtKB" id="Q6VN20"/>
    </source>
</evidence>
<evidence type="ECO:0000255" key="3">
    <source>
        <dbReference type="PROSITE-ProRule" id="PRU00058"/>
    </source>
</evidence>
<evidence type="ECO:0000255" key="4">
    <source>
        <dbReference type="PROSITE-ProRule" id="PRU00126"/>
    </source>
</evidence>
<evidence type="ECO:0000255" key="5">
    <source>
        <dbReference type="PROSITE-ProRule" id="PRU00548"/>
    </source>
</evidence>
<evidence type="ECO:0000256" key="6">
    <source>
        <dbReference type="SAM" id="MobiDB-lite"/>
    </source>
</evidence>
<evidence type="ECO:0000269" key="7">
    <source>
    </source>
</evidence>
<evidence type="ECO:0000269" key="8">
    <source>
    </source>
</evidence>
<evidence type="ECO:0000269" key="9">
    <source>
    </source>
</evidence>
<evidence type="ECO:0000305" key="10"/>
<evidence type="ECO:0007744" key="11">
    <source>
        <dbReference type="PDB" id="5JIA"/>
    </source>
</evidence>
<evidence type="ECO:0007744" key="12">
    <source>
    </source>
</evidence>
<evidence type="ECO:0007744" key="13">
    <source>
    </source>
</evidence>
<evidence type="ECO:0007829" key="14">
    <source>
        <dbReference type="PDB" id="5JIA"/>
    </source>
</evidence>
<gene>
    <name type="primary">Ranbp10</name>
    <name type="synonym">Kiaa1464</name>
</gene>
<accession>Q6VN19</accession>
<accession>Q69ZJ1</accession>
<accession>Q8C328</accession>
<accession>Q8R1E6</accession>
<reference key="1">
    <citation type="journal article" date="2004" name="Biochem. Biophys. Res. Commun.">
        <title>A novel MET-interacting protein shares high sequence similarity with RanBPM, but fails to stimulate MET-induced Ras/Erk signaling.</title>
        <authorList>
            <person name="Wang D."/>
            <person name="Li Z."/>
            <person name="Schoen S.R."/>
            <person name="Messing E.M."/>
            <person name="Wu G."/>
        </authorList>
    </citation>
    <scope>NUCLEOTIDE SEQUENCE [MRNA]</scope>
</reference>
<reference key="2">
    <citation type="journal article" date="2004" name="Genome Res.">
        <title>The status, quality, and expansion of the NIH full-length cDNA project: the Mammalian Gene Collection (MGC).</title>
        <authorList>
            <consortium name="The MGC Project Team"/>
        </authorList>
    </citation>
    <scope>NUCLEOTIDE SEQUENCE [LARGE SCALE MRNA]</scope>
    <source>
        <strain>FVB/N</strain>
        <tissue>Mammary tumor</tissue>
    </source>
</reference>
<reference key="3">
    <citation type="journal article" date="2004" name="DNA Res.">
        <title>Prediction of the coding sequences of mouse homologues of KIAA gene: IV. The complete nucleotide sequences of 500 mouse KIAA-homologous cDNAs identified by screening of terminal sequences of cDNA clones randomly sampled from size-fractionated libraries.</title>
        <authorList>
            <person name="Okazaki N."/>
            <person name="Kikuno R."/>
            <person name="Ohara R."/>
            <person name="Inamoto S."/>
            <person name="Koseki H."/>
            <person name="Hiraoka S."/>
            <person name="Saga Y."/>
            <person name="Seino S."/>
            <person name="Nishimura M."/>
            <person name="Kaisho T."/>
            <person name="Hoshino K."/>
            <person name="Kitamura H."/>
            <person name="Nagase T."/>
            <person name="Ohara O."/>
            <person name="Koga H."/>
        </authorList>
    </citation>
    <scope>NUCLEOTIDE SEQUENCE [LARGE SCALE MRNA] OF 8-620</scope>
    <source>
        <tissue>Brain</tissue>
    </source>
</reference>
<reference key="4">
    <citation type="journal article" date="2005" name="Science">
        <title>The transcriptional landscape of the mammalian genome.</title>
        <authorList>
            <person name="Carninci P."/>
            <person name="Kasukawa T."/>
            <person name="Katayama S."/>
            <person name="Gough J."/>
            <person name="Frith M.C."/>
            <person name="Maeda N."/>
            <person name="Oyama R."/>
            <person name="Ravasi T."/>
            <person name="Lenhard B."/>
            <person name="Wells C."/>
            <person name="Kodzius R."/>
            <person name="Shimokawa K."/>
            <person name="Bajic V.B."/>
            <person name="Brenner S.E."/>
            <person name="Batalov S."/>
            <person name="Forrest A.R."/>
            <person name="Zavolan M."/>
            <person name="Davis M.J."/>
            <person name="Wilming L.G."/>
            <person name="Aidinis V."/>
            <person name="Allen J.E."/>
            <person name="Ambesi-Impiombato A."/>
            <person name="Apweiler R."/>
            <person name="Aturaliya R.N."/>
            <person name="Bailey T.L."/>
            <person name="Bansal M."/>
            <person name="Baxter L."/>
            <person name="Beisel K.W."/>
            <person name="Bersano T."/>
            <person name="Bono H."/>
            <person name="Chalk A.M."/>
            <person name="Chiu K.P."/>
            <person name="Choudhary V."/>
            <person name="Christoffels A."/>
            <person name="Clutterbuck D.R."/>
            <person name="Crowe M.L."/>
            <person name="Dalla E."/>
            <person name="Dalrymple B.P."/>
            <person name="de Bono B."/>
            <person name="Della Gatta G."/>
            <person name="di Bernardo D."/>
            <person name="Down T."/>
            <person name="Engstrom P."/>
            <person name="Fagiolini M."/>
            <person name="Faulkner G."/>
            <person name="Fletcher C.F."/>
            <person name="Fukushima T."/>
            <person name="Furuno M."/>
            <person name="Futaki S."/>
            <person name="Gariboldi M."/>
            <person name="Georgii-Hemming P."/>
            <person name="Gingeras T.R."/>
            <person name="Gojobori T."/>
            <person name="Green R.E."/>
            <person name="Gustincich S."/>
            <person name="Harbers M."/>
            <person name="Hayashi Y."/>
            <person name="Hensch T.K."/>
            <person name="Hirokawa N."/>
            <person name="Hill D."/>
            <person name="Huminiecki L."/>
            <person name="Iacono M."/>
            <person name="Ikeo K."/>
            <person name="Iwama A."/>
            <person name="Ishikawa T."/>
            <person name="Jakt M."/>
            <person name="Kanapin A."/>
            <person name="Katoh M."/>
            <person name="Kawasawa Y."/>
            <person name="Kelso J."/>
            <person name="Kitamura H."/>
            <person name="Kitano H."/>
            <person name="Kollias G."/>
            <person name="Krishnan S.P."/>
            <person name="Kruger A."/>
            <person name="Kummerfeld S.K."/>
            <person name="Kurochkin I.V."/>
            <person name="Lareau L.F."/>
            <person name="Lazarevic D."/>
            <person name="Lipovich L."/>
            <person name="Liu J."/>
            <person name="Liuni S."/>
            <person name="McWilliam S."/>
            <person name="Madan Babu M."/>
            <person name="Madera M."/>
            <person name="Marchionni L."/>
            <person name="Matsuda H."/>
            <person name="Matsuzawa S."/>
            <person name="Miki H."/>
            <person name="Mignone F."/>
            <person name="Miyake S."/>
            <person name="Morris K."/>
            <person name="Mottagui-Tabar S."/>
            <person name="Mulder N."/>
            <person name="Nakano N."/>
            <person name="Nakauchi H."/>
            <person name="Ng P."/>
            <person name="Nilsson R."/>
            <person name="Nishiguchi S."/>
            <person name="Nishikawa S."/>
            <person name="Nori F."/>
            <person name="Ohara O."/>
            <person name="Okazaki Y."/>
            <person name="Orlando V."/>
            <person name="Pang K.C."/>
            <person name="Pavan W.J."/>
            <person name="Pavesi G."/>
            <person name="Pesole G."/>
            <person name="Petrovsky N."/>
            <person name="Piazza S."/>
            <person name="Reed J."/>
            <person name="Reid J.F."/>
            <person name="Ring B.Z."/>
            <person name="Ringwald M."/>
            <person name="Rost B."/>
            <person name="Ruan Y."/>
            <person name="Salzberg S.L."/>
            <person name="Sandelin A."/>
            <person name="Schneider C."/>
            <person name="Schoenbach C."/>
            <person name="Sekiguchi K."/>
            <person name="Semple C.A."/>
            <person name="Seno S."/>
            <person name="Sessa L."/>
            <person name="Sheng Y."/>
            <person name="Shibata Y."/>
            <person name="Shimada H."/>
            <person name="Shimada K."/>
            <person name="Silva D."/>
            <person name="Sinclair B."/>
            <person name="Sperling S."/>
            <person name="Stupka E."/>
            <person name="Sugiura K."/>
            <person name="Sultana R."/>
            <person name="Takenaka Y."/>
            <person name="Taki K."/>
            <person name="Tammoja K."/>
            <person name="Tan S.L."/>
            <person name="Tang S."/>
            <person name="Taylor M.S."/>
            <person name="Tegner J."/>
            <person name="Teichmann S.A."/>
            <person name="Ueda H.R."/>
            <person name="van Nimwegen E."/>
            <person name="Verardo R."/>
            <person name="Wei C.L."/>
            <person name="Yagi K."/>
            <person name="Yamanishi H."/>
            <person name="Zabarovsky E."/>
            <person name="Zhu S."/>
            <person name="Zimmer A."/>
            <person name="Hide W."/>
            <person name="Bult C."/>
            <person name="Grimmond S.M."/>
            <person name="Teasdale R.D."/>
            <person name="Liu E.T."/>
            <person name="Brusic V."/>
            <person name="Quackenbush J."/>
            <person name="Wahlestedt C."/>
            <person name="Mattick J.S."/>
            <person name="Hume D.A."/>
            <person name="Kai C."/>
            <person name="Sasaki D."/>
            <person name="Tomaru Y."/>
            <person name="Fukuda S."/>
            <person name="Kanamori-Katayama M."/>
            <person name="Suzuki M."/>
            <person name="Aoki J."/>
            <person name="Arakawa T."/>
            <person name="Iida J."/>
            <person name="Imamura K."/>
            <person name="Itoh M."/>
            <person name="Kato T."/>
            <person name="Kawaji H."/>
            <person name="Kawagashira N."/>
            <person name="Kawashima T."/>
            <person name="Kojima M."/>
            <person name="Kondo S."/>
            <person name="Konno H."/>
            <person name="Nakano K."/>
            <person name="Ninomiya N."/>
            <person name="Nishio T."/>
            <person name="Okada M."/>
            <person name="Plessy C."/>
            <person name="Shibata K."/>
            <person name="Shiraki T."/>
            <person name="Suzuki S."/>
            <person name="Tagami M."/>
            <person name="Waki K."/>
            <person name="Watahiki A."/>
            <person name="Okamura-Oho Y."/>
            <person name="Suzuki H."/>
            <person name="Kawai J."/>
            <person name="Hayashizaki Y."/>
        </authorList>
    </citation>
    <scope>NUCLEOTIDE SEQUENCE [LARGE SCALE MRNA] OF 474-620</scope>
    <source>
        <strain>C57BL/6J</strain>
        <tissue>Lung</tissue>
    </source>
</reference>
<reference key="5">
    <citation type="journal article" date="2004" name="Mol. Cell. Proteomics">
        <title>Phosphoproteomic analysis of the developing mouse brain.</title>
        <authorList>
            <person name="Ballif B.A."/>
            <person name="Villen J."/>
            <person name="Beausoleil S.A."/>
            <person name="Schwartz D."/>
            <person name="Gygi S.P."/>
        </authorList>
    </citation>
    <scope>IDENTIFICATION BY MASS SPECTROMETRY [LARGE SCALE ANALYSIS]</scope>
    <source>
        <tissue>Embryonic brain</tissue>
    </source>
</reference>
<reference key="6">
    <citation type="journal article" date="2007" name="Proc. Natl. Acad. Sci. U.S.A.">
        <title>Large-scale phosphorylation analysis of mouse liver.</title>
        <authorList>
            <person name="Villen J."/>
            <person name="Beausoleil S.A."/>
            <person name="Gerber S.A."/>
            <person name="Gygi S.P."/>
        </authorList>
    </citation>
    <scope>PHOSPHORYLATION [LARGE SCALE ANALYSIS] AT SER-365 AND SER-369</scope>
    <scope>IDENTIFICATION BY MASS SPECTROMETRY [LARGE SCALE ANALYSIS]</scope>
    <source>
        <tissue>Liver</tissue>
    </source>
</reference>
<reference key="7">
    <citation type="journal article" date="2008" name="J. Biol. Chem.">
        <title>RanBP10 is a cytoplasmic guanine nucleotide exchange factor that modulates noncentrosomal microtubules.</title>
        <authorList>
            <person name="Schulze H."/>
            <person name="Dose M."/>
            <person name="Korpal M."/>
            <person name="Meyer I."/>
            <person name="Italiano J.E. Jr."/>
            <person name="Shivdasani R.A."/>
        </authorList>
    </citation>
    <scope>FUNCTION</scope>
    <scope>INTERACTION WITH RAN; TUBB1 AND TUBB5</scope>
    <scope>SUBCELLULAR LOCATION</scope>
    <scope>TISSUE SPECIFICITY</scope>
    <scope>MUTAGENESIS OF LEU-301</scope>
</reference>
<reference key="8">
    <citation type="journal article" date="2009" name="Blood">
        <title>The microtubule modulator RanBP10 plays a critical role in regulation of platelet discoid shape and degranulation.</title>
        <authorList>
            <person name="Kunert S."/>
            <person name="Meyer I."/>
            <person name="Fleischhauer S."/>
            <person name="Wannack M."/>
            <person name="Fiedler J."/>
            <person name="Shivdasani R.A."/>
            <person name="Schulze H."/>
        </authorList>
    </citation>
    <scope>FUNCTION</scope>
    <scope>DISRUPTION PHENOTYPE</scope>
</reference>
<reference key="9">
    <citation type="journal article" date="2010" name="Cell">
        <title>A tissue-specific atlas of mouse protein phosphorylation and expression.</title>
        <authorList>
            <person name="Huttlin E.L."/>
            <person name="Jedrychowski M.P."/>
            <person name="Elias J.E."/>
            <person name="Goswami T."/>
            <person name="Rad R."/>
            <person name="Beausoleil S.A."/>
            <person name="Villen J."/>
            <person name="Haas W."/>
            <person name="Sowa M.E."/>
            <person name="Gygi S.P."/>
        </authorList>
    </citation>
    <scope>PHOSPHORYLATION [LARGE SCALE ANALYSIS] AT TYR-362; SER-365; SER-367; SER-369; SER-451 AND SER-453</scope>
    <scope>IDENTIFICATION BY MASS SPECTROMETRY [LARGE SCALE ANALYSIS]</scope>
    <source>
        <tissue>Brain</tissue>
        <tissue>Brown adipose tissue</tissue>
        <tissue>Heart</tissue>
        <tissue>Kidney</tissue>
        <tissue>Liver</tissue>
        <tissue>Lung</tissue>
        <tissue>Pancreas</tissue>
        <tissue>Spleen</tissue>
        <tissue>Testis</tissue>
    </source>
</reference>
<reference evidence="11" key="10">
    <citation type="journal article" date="2016" name="J. Mol. Biol.">
        <title>Structural Basis for the Interaction between the IUS-SPRY Domain of RanBPM and DDX-4 in Germ Cell Development.</title>
        <authorList>
            <person name="Hong S.K."/>
            <person name="Kim K.H."/>
            <person name="Song E.J."/>
            <person name="Kim E.E."/>
        </authorList>
    </citation>
    <scope>X-RAY CRYSTALLOGRAPHY (1.80 ANGSTROMS) OF 29-238</scope>
    <scope>INTERACTION WITH DDX4</scope>
</reference>
<organism>
    <name type="scientific">Mus musculus</name>
    <name type="common">Mouse</name>
    <dbReference type="NCBI Taxonomy" id="10090"/>
    <lineage>
        <taxon>Eukaryota</taxon>
        <taxon>Metazoa</taxon>
        <taxon>Chordata</taxon>
        <taxon>Craniata</taxon>
        <taxon>Vertebrata</taxon>
        <taxon>Euteleostomi</taxon>
        <taxon>Mammalia</taxon>
        <taxon>Eutheria</taxon>
        <taxon>Euarchontoglires</taxon>
        <taxon>Glires</taxon>
        <taxon>Rodentia</taxon>
        <taxon>Myomorpha</taxon>
        <taxon>Muroidea</taxon>
        <taxon>Muridae</taxon>
        <taxon>Murinae</taxon>
        <taxon>Mus</taxon>
        <taxon>Mus</taxon>
    </lineage>
</organism>
<dbReference type="EMBL" id="AY337314">
    <property type="protein sequence ID" value="AAR01221.1"/>
    <property type="status" value="ALT_INIT"/>
    <property type="molecule type" value="mRNA"/>
</dbReference>
<dbReference type="EMBL" id="BC024698">
    <property type="protein sequence ID" value="AAH24698.1"/>
    <property type="status" value="ALT_INIT"/>
    <property type="molecule type" value="mRNA"/>
</dbReference>
<dbReference type="EMBL" id="AK173177">
    <property type="protein sequence ID" value="BAD32455.1"/>
    <property type="molecule type" value="mRNA"/>
</dbReference>
<dbReference type="EMBL" id="AK087165">
    <property type="protein sequence ID" value="BAC39817.1"/>
    <property type="molecule type" value="mRNA"/>
</dbReference>
<dbReference type="CCDS" id="CCDS22613.1"/>
<dbReference type="RefSeq" id="NP_665823.2">
    <property type="nucleotide sequence ID" value="NM_145824.4"/>
</dbReference>
<dbReference type="PDB" id="5JIA">
    <property type="method" value="X-ray"/>
    <property type="resolution" value="1.80 A"/>
    <property type="chains" value="A/B/C/D/E/F/G/H/I/J/K/L/M/N/O/P=29-238"/>
</dbReference>
<dbReference type="PDBsum" id="5JIA"/>
<dbReference type="SMR" id="Q6VN19"/>
<dbReference type="BioGRID" id="216672">
    <property type="interactions" value="5"/>
</dbReference>
<dbReference type="FunCoup" id="Q6VN19">
    <property type="interactions" value="2168"/>
</dbReference>
<dbReference type="IntAct" id="Q6VN19">
    <property type="interactions" value="2"/>
</dbReference>
<dbReference type="MINT" id="Q6VN19"/>
<dbReference type="STRING" id="10090.ENSMUSP00000040045"/>
<dbReference type="GlyGen" id="Q6VN19">
    <property type="glycosylation" value="1 site"/>
</dbReference>
<dbReference type="iPTMnet" id="Q6VN19"/>
<dbReference type="PhosphoSitePlus" id="Q6VN19"/>
<dbReference type="SwissPalm" id="Q6VN19"/>
<dbReference type="PaxDb" id="10090-ENSMUSP00000040045"/>
<dbReference type="ProteomicsDB" id="253183"/>
<dbReference type="Pumba" id="Q6VN19"/>
<dbReference type="Antibodypedia" id="44334">
    <property type="antibodies" value="78 antibodies from 24 providers"/>
</dbReference>
<dbReference type="DNASU" id="74334"/>
<dbReference type="Ensembl" id="ENSMUST00000239468.2">
    <property type="protein sequence ID" value="ENSMUSP00000159340.2"/>
    <property type="gene ID" value="ENSMUSG00000037415.8"/>
</dbReference>
<dbReference type="GeneID" id="74334"/>
<dbReference type="KEGG" id="mmu:74334"/>
<dbReference type="UCSC" id="uc009nec.1">
    <property type="organism name" value="mouse"/>
</dbReference>
<dbReference type="AGR" id="MGI:1921584"/>
<dbReference type="CTD" id="57610"/>
<dbReference type="MGI" id="MGI:1921584">
    <property type="gene designation" value="Ranbp10"/>
</dbReference>
<dbReference type="VEuPathDB" id="HostDB:ENSMUSG00000037415"/>
<dbReference type="eggNOG" id="KOG1477">
    <property type="taxonomic scope" value="Eukaryota"/>
</dbReference>
<dbReference type="GeneTree" id="ENSGT00940000158257"/>
<dbReference type="InParanoid" id="Q6VN19"/>
<dbReference type="OrthoDB" id="25503at2759"/>
<dbReference type="TreeFam" id="TF331658"/>
<dbReference type="Reactome" id="R-MMU-8851805">
    <property type="pathway name" value="MET activates RAS signaling"/>
</dbReference>
<dbReference type="BioGRID-ORCS" id="74334">
    <property type="hits" value="0 hits in 78 CRISPR screens"/>
</dbReference>
<dbReference type="ChiTaRS" id="Ranbp10">
    <property type="organism name" value="mouse"/>
</dbReference>
<dbReference type="PRO" id="PR:Q6VN19"/>
<dbReference type="Proteomes" id="UP000000589">
    <property type="component" value="Chromosome 8"/>
</dbReference>
<dbReference type="RNAct" id="Q6VN19">
    <property type="molecule type" value="protein"/>
</dbReference>
<dbReference type="Bgee" id="ENSMUSG00000037415">
    <property type="expression patterns" value="Expressed in fetal liver hematopoietic progenitor cell and 245 other cell types or tissues"/>
</dbReference>
<dbReference type="ExpressionAtlas" id="Q6VN19">
    <property type="expression patterns" value="baseline and differential"/>
</dbReference>
<dbReference type="GO" id="GO:0005737">
    <property type="term" value="C:cytoplasm"/>
    <property type="evidence" value="ECO:0000314"/>
    <property type="project" value="MGI"/>
</dbReference>
<dbReference type="GO" id="GO:0015630">
    <property type="term" value="C:microtubule cytoskeleton"/>
    <property type="evidence" value="ECO:0000314"/>
    <property type="project" value="MGI"/>
</dbReference>
<dbReference type="GO" id="GO:0005634">
    <property type="term" value="C:nucleus"/>
    <property type="evidence" value="ECO:0007669"/>
    <property type="project" value="UniProtKB-SubCell"/>
</dbReference>
<dbReference type="GO" id="GO:0000151">
    <property type="term" value="C:ubiquitin ligase complex"/>
    <property type="evidence" value="ECO:0007669"/>
    <property type="project" value="Ensembl"/>
</dbReference>
<dbReference type="GO" id="GO:0048487">
    <property type="term" value="F:beta-tubulin binding"/>
    <property type="evidence" value="ECO:0000314"/>
    <property type="project" value="MGI"/>
</dbReference>
<dbReference type="GO" id="GO:0005085">
    <property type="term" value="F:guanyl-nucleotide exchange factor activity"/>
    <property type="evidence" value="ECO:0000314"/>
    <property type="project" value="MGI"/>
</dbReference>
<dbReference type="GO" id="GO:0031267">
    <property type="term" value="F:small GTPase binding"/>
    <property type="evidence" value="ECO:0000353"/>
    <property type="project" value="MGI"/>
</dbReference>
<dbReference type="GO" id="GO:0000226">
    <property type="term" value="P:microtubule cytoskeleton organization"/>
    <property type="evidence" value="ECO:0000315"/>
    <property type="project" value="MGI"/>
</dbReference>
<dbReference type="CDD" id="cd12909">
    <property type="entry name" value="SPRY_RanBP9_10"/>
    <property type="match status" value="1"/>
</dbReference>
<dbReference type="FunFam" id="2.60.120.920:FF:000011">
    <property type="entry name" value="RAN binding protein 10"/>
    <property type="match status" value="1"/>
</dbReference>
<dbReference type="Gene3D" id="2.60.120.920">
    <property type="match status" value="1"/>
</dbReference>
<dbReference type="InterPro" id="IPR001870">
    <property type="entry name" value="B30.2/SPRY"/>
</dbReference>
<dbReference type="InterPro" id="IPR043136">
    <property type="entry name" value="B30.2/SPRY_sf"/>
</dbReference>
<dbReference type="InterPro" id="IPR013320">
    <property type="entry name" value="ConA-like_dom_sf"/>
</dbReference>
<dbReference type="InterPro" id="IPR013144">
    <property type="entry name" value="CRA_dom"/>
</dbReference>
<dbReference type="InterPro" id="IPR024964">
    <property type="entry name" value="CTLH/CRA"/>
</dbReference>
<dbReference type="InterPro" id="IPR006595">
    <property type="entry name" value="CTLH_C"/>
</dbReference>
<dbReference type="InterPro" id="IPR006594">
    <property type="entry name" value="LisH"/>
</dbReference>
<dbReference type="InterPro" id="IPR003877">
    <property type="entry name" value="SPRY_dom"/>
</dbReference>
<dbReference type="InterPro" id="IPR035782">
    <property type="entry name" value="SPRY_RanBP9/10"/>
</dbReference>
<dbReference type="InterPro" id="IPR050618">
    <property type="entry name" value="Ubq-SigPath_Reg"/>
</dbReference>
<dbReference type="PANTHER" id="PTHR12864">
    <property type="entry name" value="RAN BINDING PROTEIN 9-RELATED"/>
    <property type="match status" value="1"/>
</dbReference>
<dbReference type="Pfam" id="PF10607">
    <property type="entry name" value="CTLH"/>
    <property type="match status" value="2"/>
</dbReference>
<dbReference type="Pfam" id="PF08513">
    <property type="entry name" value="LisH"/>
    <property type="match status" value="1"/>
</dbReference>
<dbReference type="Pfam" id="PF00622">
    <property type="entry name" value="SPRY"/>
    <property type="match status" value="1"/>
</dbReference>
<dbReference type="SMART" id="SM00757">
    <property type="entry name" value="CRA"/>
    <property type="match status" value="1"/>
</dbReference>
<dbReference type="SMART" id="SM00668">
    <property type="entry name" value="CTLH"/>
    <property type="match status" value="1"/>
</dbReference>
<dbReference type="SMART" id="SM00449">
    <property type="entry name" value="SPRY"/>
    <property type="match status" value="1"/>
</dbReference>
<dbReference type="SUPFAM" id="SSF49899">
    <property type="entry name" value="Concanavalin A-like lectins/glucanases"/>
    <property type="match status" value="1"/>
</dbReference>
<dbReference type="PROSITE" id="PS50188">
    <property type="entry name" value="B302_SPRY"/>
    <property type="match status" value="1"/>
</dbReference>
<dbReference type="PROSITE" id="PS50897">
    <property type="entry name" value="CTLH"/>
    <property type="match status" value="1"/>
</dbReference>
<dbReference type="PROSITE" id="PS50896">
    <property type="entry name" value="LISH"/>
    <property type="match status" value="1"/>
</dbReference>
<protein>
    <recommendedName>
        <fullName>Ran-binding protein 10</fullName>
        <shortName>RanBP10</shortName>
    </recommendedName>
</protein>
<sequence>MAAATADPGAGNPQAGDSSGGDSGGGLPSPGEQELSRRLQRLYPAVNQHETPLPRSWSPKDKYNYIGLSQGNLRVHYKGHGKNHKDAASVRATHPIPAACGIYYFEVKIVSKGRDGYMGIGLSAQGVNMNRLPGWDKHSYGYHGDDGHSFCSSGTGQPYGPTFTTGDVIGCCVNLINGTCFYTKNGHSLGIAFTDLPANLYPTVGLQTPGEIVDANFGQQPFLFDIEDYMREWRAKVQGTVHGFPISARLGEWQAVLQNMVSSYLVHHGYCSTATAFARMTETPIQEEQASIKNRQKIQKLVLEGRVGEAIETTQRFYPGLLEHNPNLLFMLKCRQFVEMVNGTDSEVRSLSSRSPKSQDSYPGSPSLSPRHGPSSSHIHNTGADSPSCSNGVASTKNKQNHSKYPAPSSSSSSSSSSSSSSPSSVNYSESNSTDSTKSQPHSSTSNQETSDSEMEMEAEHYPNGVLESVSTRIVNGAYKHDDLQTDESSMDDGHPRRQLCGGNQAATERIILFGRELQALSEQLGREYGKNLAHTEMLQDAFSLLAYSDPWSCPVGHQLDPIQREPVCAALNSAILESQNLPKQPPLMLALGQASECLRLMARAGLGSCSFARVDDYLH</sequence>
<keyword id="KW-0002">3D-structure</keyword>
<keyword id="KW-0007">Acetylation</keyword>
<keyword id="KW-0963">Cytoplasm</keyword>
<keyword id="KW-0539">Nucleus</keyword>
<keyword id="KW-0597">Phosphoprotein</keyword>
<keyword id="KW-1185">Reference proteome</keyword>
<name>RBP10_MOUSE</name>
<feature type="initiator methionine" description="Removed" evidence="2">
    <location>
        <position position="1"/>
    </location>
</feature>
<feature type="chain" id="PRO_0000305238" description="Ran-binding protein 10">
    <location>
        <begin position="2"/>
        <end position="620"/>
    </location>
</feature>
<feature type="domain" description="B30.2/SPRY" evidence="5">
    <location>
        <begin position="35"/>
        <end position="222"/>
    </location>
</feature>
<feature type="domain" description="LisH" evidence="4">
    <location>
        <begin position="253"/>
        <end position="285"/>
    </location>
</feature>
<feature type="domain" description="CTLH" evidence="3">
    <location>
        <begin position="291"/>
        <end position="348"/>
    </location>
</feature>
<feature type="region of interest" description="Disordered" evidence="6">
    <location>
        <begin position="1"/>
        <end position="38"/>
    </location>
</feature>
<feature type="region of interest" description="Disordered" evidence="6">
    <location>
        <begin position="347"/>
        <end position="460"/>
    </location>
</feature>
<feature type="compositionally biased region" description="Gly residues" evidence="6">
    <location>
        <begin position="18"/>
        <end position="28"/>
    </location>
</feature>
<feature type="compositionally biased region" description="Polar residues" evidence="6">
    <location>
        <begin position="347"/>
        <end position="398"/>
    </location>
</feature>
<feature type="compositionally biased region" description="Low complexity" evidence="6">
    <location>
        <begin position="409"/>
        <end position="436"/>
    </location>
</feature>
<feature type="compositionally biased region" description="Polar residues" evidence="6">
    <location>
        <begin position="437"/>
        <end position="450"/>
    </location>
</feature>
<feature type="modified residue" description="N-acetylalanine" evidence="2">
    <location>
        <position position="2"/>
    </location>
</feature>
<feature type="modified residue" description="Phosphoserine" evidence="2">
    <location>
        <position position="361"/>
    </location>
</feature>
<feature type="modified residue" description="Phosphotyrosine" evidence="13">
    <location>
        <position position="362"/>
    </location>
</feature>
<feature type="modified residue" description="Phosphoserine" evidence="12 13">
    <location>
        <position position="365"/>
    </location>
</feature>
<feature type="modified residue" description="Phosphoserine" evidence="13">
    <location>
        <position position="367"/>
    </location>
</feature>
<feature type="modified residue" description="Phosphoserine" evidence="12 13">
    <location>
        <position position="369"/>
    </location>
</feature>
<feature type="modified residue" description="Phosphoserine" evidence="2">
    <location>
        <position position="422"/>
    </location>
</feature>
<feature type="modified residue" description="Phosphoserine" evidence="13">
    <location>
        <position position="451"/>
    </location>
</feature>
<feature type="modified residue" description="Phosphoserine" evidence="13">
    <location>
        <position position="453"/>
    </location>
</feature>
<feature type="mutagenesis site" description="Complete loss RAN-GEF activity. Partial loss of RAN-binding." evidence="7">
    <original>L</original>
    <variation>I</variation>
    <location>
        <position position="301"/>
    </location>
</feature>
<feature type="helix" evidence="14">
    <location>
        <begin position="34"/>
        <end position="42"/>
    </location>
</feature>
<feature type="turn" evidence="14">
    <location>
        <begin position="48"/>
        <end position="50"/>
    </location>
</feature>
<feature type="strand" evidence="14">
    <location>
        <begin position="56"/>
        <end position="62"/>
    </location>
</feature>
<feature type="strand" evidence="14">
    <location>
        <begin position="66"/>
        <end position="69"/>
    </location>
</feature>
<feature type="turn" evidence="14">
    <location>
        <begin position="70"/>
        <end position="73"/>
    </location>
</feature>
<feature type="strand" evidence="14">
    <location>
        <begin position="74"/>
        <end position="77"/>
    </location>
</feature>
<feature type="helix" evidence="14">
    <location>
        <begin position="84"/>
        <end position="86"/>
    </location>
</feature>
<feature type="strand" evidence="14">
    <location>
        <begin position="88"/>
        <end position="94"/>
    </location>
</feature>
<feature type="helix" evidence="14">
    <location>
        <begin position="98"/>
        <end position="100"/>
    </location>
</feature>
<feature type="strand" evidence="14">
    <location>
        <begin position="101"/>
        <end position="112"/>
    </location>
</feature>
<feature type="turn" evidence="14">
    <location>
        <begin position="113"/>
        <end position="115"/>
    </location>
</feature>
<feature type="strand" evidence="14">
    <location>
        <begin position="119"/>
        <end position="123"/>
    </location>
</feature>
<feature type="strand" evidence="14">
    <location>
        <begin position="129"/>
        <end position="131"/>
    </location>
</feature>
<feature type="strand" evidence="14">
    <location>
        <begin position="139"/>
        <end position="143"/>
    </location>
</feature>
<feature type="turn" evidence="14">
    <location>
        <begin position="144"/>
        <end position="146"/>
    </location>
</feature>
<feature type="strand" evidence="14">
    <location>
        <begin position="148"/>
        <end position="155"/>
    </location>
</feature>
<feature type="strand" evidence="14">
    <location>
        <begin position="168"/>
        <end position="174"/>
    </location>
</feature>
<feature type="turn" evidence="14">
    <location>
        <begin position="175"/>
        <end position="178"/>
    </location>
</feature>
<feature type="strand" evidence="14">
    <location>
        <begin position="179"/>
        <end position="184"/>
    </location>
</feature>
<feature type="strand" evidence="14">
    <location>
        <begin position="187"/>
        <end position="193"/>
    </location>
</feature>
<feature type="strand" evidence="14">
    <location>
        <begin position="201"/>
        <end position="206"/>
    </location>
</feature>
<feature type="strand" evidence="14">
    <location>
        <begin position="211"/>
        <end position="220"/>
    </location>
</feature>
<feature type="helix" evidence="14">
    <location>
        <begin position="226"/>
        <end position="236"/>
    </location>
</feature>
<proteinExistence type="evidence at protein level"/>